<dbReference type="EMBL" id="AP006714">
    <property type="protein sequence ID" value="BAD27330.1"/>
    <property type="molecule type" value="Genomic_DNA"/>
</dbReference>
<dbReference type="RefSeq" id="YP_009389608.1">
    <property type="nucleotide sequence ID" value="NC_035224.1"/>
</dbReference>
<dbReference type="SMR" id="Q6ENS6"/>
<dbReference type="GeneID" id="33347825"/>
<dbReference type="GO" id="GO:0009507">
    <property type="term" value="C:chloroplast"/>
    <property type="evidence" value="ECO:0007669"/>
    <property type="project" value="UniProtKB-SubCell"/>
</dbReference>
<dbReference type="GO" id="GO:0005762">
    <property type="term" value="C:mitochondrial large ribosomal subunit"/>
    <property type="evidence" value="ECO:0007669"/>
    <property type="project" value="TreeGrafter"/>
</dbReference>
<dbReference type="GO" id="GO:0019843">
    <property type="term" value="F:rRNA binding"/>
    <property type="evidence" value="ECO:0007669"/>
    <property type="project" value="InterPro"/>
</dbReference>
<dbReference type="GO" id="GO:0003735">
    <property type="term" value="F:structural constituent of ribosome"/>
    <property type="evidence" value="ECO:0007669"/>
    <property type="project" value="InterPro"/>
</dbReference>
<dbReference type="GO" id="GO:0032543">
    <property type="term" value="P:mitochondrial translation"/>
    <property type="evidence" value="ECO:0007669"/>
    <property type="project" value="TreeGrafter"/>
</dbReference>
<dbReference type="CDD" id="cd01433">
    <property type="entry name" value="Ribosomal_L16_L10e"/>
    <property type="match status" value="1"/>
</dbReference>
<dbReference type="FunFam" id="3.90.1170.10:FF:000001">
    <property type="entry name" value="50S ribosomal protein L16"/>
    <property type="match status" value="1"/>
</dbReference>
<dbReference type="Gene3D" id="3.90.1170.10">
    <property type="entry name" value="Ribosomal protein L10e/L16"/>
    <property type="match status" value="1"/>
</dbReference>
<dbReference type="HAMAP" id="MF_01342">
    <property type="entry name" value="Ribosomal_uL16"/>
    <property type="match status" value="1"/>
</dbReference>
<dbReference type="InterPro" id="IPR047873">
    <property type="entry name" value="Ribosomal_uL16"/>
</dbReference>
<dbReference type="InterPro" id="IPR000114">
    <property type="entry name" value="Ribosomal_uL16_bact-type"/>
</dbReference>
<dbReference type="InterPro" id="IPR020798">
    <property type="entry name" value="Ribosomal_uL16_CS"/>
</dbReference>
<dbReference type="InterPro" id="IPR016180">
    <property type="entry name" value="Ribosomal_uL16_dom"/>
</dbReference>
<dbReference type="InterPro" id="IPR036920">
    <property type="entry name" value="Ribosomal_uL16_sf"/>
</dbReference>
<dbReference type="NCBIfam" id="TIGR01164">
    <property type="entry name" value="rplP_bact"/>
    <property type="match status" value="1"/>
</dbReference>
<dbReference type="PANTHER" id="PTHR12220">
    <property type="entry name" value="50S/60S RIBOSOMAL PROTEIN L16"/>
    <property type="match status" value="1"/>
</dbReference>
<dbReference type="PANTHER" id="PTHR12220:SF13">
    <property type="entry name" value="LARGE RIBOSOMAL SUBUNIT PROTEIN UL16M"/>
    <property type="match status" value="1"/>
</dbReference>
<dbReference type="Pfam" id="PF00252">
    <property type="entry name" value="Ribosomal_L16"/>
    <property type="match status" value="1"/>
</dbReference>
<dbReference type="PRINTS" id="PR00060">
    <property type="entry name" value="RIBOSOMALL16"/>
</dbReference>
<dbReference type="SUPFAM" id="SSF54686">
    <property type="entry name" value="Ribosomal protein L16p/L10e"/>
    <property type="match status" value="1"/>
</dbReference>
<dbReference type="PROSITE" id="PS00586">
    <property type="entry name" value="RIBOSOMAL_L16_1"/>
    <property type="match status" value="1"/>
</dbReference>
<dbReference type="PROSITE" id="PS00701">
    <property type="entry name" value="RIBOSOMAL_L16_2"/>
    <property type="match status" value="1"/>
</dbReference>
<comment type="subunit">
    <text evidence="1">Part of the 50S ribosomal subunit.</text>
</comment>
<comment type="subcellular location">
    <subcellularLocation>
        <location>Plastid</location>
        <location>Chloroplast</location>
    </subcellularLocation>
</comment>
<comment type="similarity">
    <text evidence="1">Belongs to the universal ribosomal protein uL16 family.</text>
</comment>
<accession>Q6ENS6</accession>
<geneLocation type="chloroplast"/>
<feature type="chain" id="PRO_0000062311" description="Large ribosomal subunit protein uL16c">
    <location>
        <begin position="1"/>
        <end position="136"/>
    </location>
</feature>
<gene>
    <name evidence="1" type="primary">rpl16</name>
</gene>
<reference key="1">
    <citation type="journal article" date="2004" name="DNA Res.">
        <title>Complete nucleotide sequence of the sugarcane (Saccharum officinarum) chloroplast genome: a comparative analysis of four monocot chloroplast genomes.</title>
        <authorList>
            <person name="Asano T."/>
            <person name="Tsudzuki T."/>
            <person name="Takahashi S."/>
            <person name="Shimada H."/>
            <person name="Kadowaki K."/>
        </authorList>
    </citation>
    <scope>NUCLEOTIDE SEQUENCE [LARGE SCALE GENOMIC DNA]</scope>
</reference>
<keyword id="KW-0150">Chloroplast</keyword>
<keyword id="KW-0934">Plastid</keyword>
<keyword id="KW-0687">Ribonucleoprotein</keyword>
<keyword id="KW-0689">Ribosomal protein</keyword>
<name>RK16_SACOF</name>
<evidence type="ECO:0000255" key="1">
    <source>
        <dbReference type="HAMAP-Rule" id="MF_01342"/>
    </source>
</evidence>
<evidence type="ECO:0000305" key="2"/>
<protein>
    <recommendedName>
        <fullName evidence="1">Large ribosomal subunit protein uL16c</fullName>
    </recommendedName>
    <alternativeName>
        <fullName evidence="2">50S ribosomal protein L16, chloroplastic</fullName>
    </alternativeName>
</protein>
<organism>
    <name type="scientific">Saccharum officinarum</name>
    <name type="common">Sugarcane</name>
    <dbReference type="NCBI Taxonomy" id="4547"/>
    <lineage>
        <taxon>Eukaryota</taxon>
        <taxon>Viridiplantae</taxon>
        <taxon>Streptophyta</taxon>
        <taxon>Embryophyta</taxon>
        <taxon>Tracheophyta</taxon>
        <taxon>Spermatophyta</taxon>
        <taxon>Magnoliopsida</taxon>
        <taxon>Liliopsida</taxon>
        <taxon>Poales</taxon>
        <taxon>Poaceae</taxon>
        <taxon>PACMAD clade</taxon>
        <taxon>Panicoideae</taxon>
        <taxon>Andropogonodae</taxon>
        <taxon>Andropogoneae</taxon>
        <taxon>Saccharinae</taxon>
        <taxon>Saccharum</taxon>
        <taxon>Saccharum officinarum species complex</taxon>
    </lineage>
</organism>
<sequence>MLSPKRTRFRKQHRGRMNGKSCRGNHICFGRYALQVLEPAWITARQIEAGRRAMTRYARRGGKIWVRIFPDKPVTIRPTETRMGSGKGSPEYWVAVVKPGRILYEMSGVSETVARAAISIAASKMPIRSQFLRLEI</sequence>
<proteinExistence type="inferred from homology"/>